<accession>A8F1H0</accession>
<feature type="chain" id="PRO_1000057779" description="Deoxyuridine 5'-triphosphate nucleotidohydrolase">
    <location>
        <begin position="1"/>
        <end position="148"/>
    </location>
</feature>
<feature type="binding site" evidence="1">
    <location>
        <begin position="68"/>
        <end position="70"/>
    </location>
    <ligand>
        <name>substrate</name>
    </ligand>
</feature>
<feature type="binding site" evidence="1">
    <location>
        <position position="81"/>
    </location>
    <ligand>
        <name>substrate</name>
    </ligand>
</feature>
<feature type="binding site" evidence="1">
    <location>
        <begin position="85"/>
        <end position="87"/>
    </location>
    <ligand>
        <name>substrate</name>
    </ligand>
</feature>
<feature type="binding site" evidence="1">
    <location>
        <position position="95"/>
    </location>
    <ligand>
        <name>substrate</name>
    </ligand>
</feature>
<sequence>MTITQVKIKKLENFSGSLPEYATEHSAGMDLIAANEQPITIKAGAIQLIPTGIAIALPDSFEAQIRPRSGLAVKHGITVANSPGTIDADYRGEIKVILINLGKEDFIIEKGMRIAQMIIAKYERILWEESSSLMETMRGSGGFGSTGV</sequence>
<protein>
    <recommendedName>
        <fullName evidence="1">Deoxyuridine 5'-triphosphate nucleotidohydrolase</fullName>
        <shortName evidence="1">dUTPase</shortName>
        <ecNumber evidence="1">3.6.1.23</ecNumber>
    </recommendedName>
    <alternativeName>
        <fullName evidence="1">dUTP pyrophosphatase</fullName>
    </alternativeName>
</protein>
<reference key="1">
    <citation type="journal article" date="2007" name="Genome Res.">
        <title>Lateral gene transfer between obligate intracellular bacteria: evidence from the Rickettsia massiliae genome.</title>
        <authorList>
            <person name="Blanc G."/>
            <person name="Ogata H."/>
            <person name="Robert C."/>
            <person name="Audic S."/>
            <person name="Claverie J.-M."/>
            <person name="Raoult D."/>
        </authorList>
    </citation>
    <scope>NUCLEOTIDE SEQUENCE [LARGE SCALE GENOMIC DNA]</scope>
    <source>
        <strain>Mtu5</strain>
    </source>
</reference>
<name>DUT_RICM5</name>
<evidence type="ECO:0000255" key="1">
    <source>
        <dbReference type="HAMAP-Rule" id="MF_00116"/>
    </source>
</evidence>
<proteinExistence type="inferred from homology"/>
<comment type="function">
    <text evidence="1">This enzyme is involved in nucleotide metabolism: it produces dUMP, the immediate precursor of thymidine nucleotides and it decreases the intracellular concentration of dUTP so that uracil cannot be incorporated into DNA.</text>
</comment>
<comment type="catalytic activity">
    <reaction evidence="1">
        <text>dUTP + H2O = dUMP + diphosphate + H(+)</text>
        <dbReference type="Rhea" id="RHEA:10248"/>
        <dbReference type="ChEBI" id="CHEBI:15377"/>
        <dbReference type="ChEBI" id="CHEBI:15378"/>
        <dbReference type="ChEBI" id="CHEBI:33019"/>
        <dbReference type="ChEBI" id="CHEBI:61555"/>
        <dbReference type="ChEBI" id="CHEBI:246422"/>
        <dbReference type="EC" id="3.6.1.23"/>
    </reaction>
</comment>
<comment type="cofactor">
    <cofactor evidence="1">
        <name>Mg(2+)</name>
        <dbReference type="ChEBI" id="CHEBI:18420"/>
    </cofactor>
</comment>
<comment type="pathway">
    <text evidence="1">Pyrimidine metabolism; dUMP biosynthesis; dUMP from dCTP (dUTP route): step 2/2.</text>
</comment>
<comment type="similarity">
    <text evidence="1">Belongs to the dUTPase family.</text>
</comment>
<gene>
    <name evidence="1" type="primary">dut</name>
    <name type="ordered locus">RMA_0563</name>
</gene>
<keyword id="KW-0378">Hydrolase</keyword>
<keyword id="KW-0460">Magnesium</keyword>
<keyword id="KW-0479">Metal-binding</keyword>
<keyword id="KW-0546">Nucleotide metabolism</keyword>
<dbReference type="EC" id="3.6.1.23" evidence="1"/>
<dbReference type="EMBL" id="CP000683">
    <property type="protein sequence ID" value="ABV84756.1"/>
    <property type="molecule type" value="Genomic_DNA"/>
</dbReference>
<dbReference type="RefSeq" id="WP_012152731.1">
    <property type="nucleotide sequence ID" value="NC_009900.1"/>
</dbReference>
<dbReference type="SMR" id="A8F1H0"/>
<dbReference type="KEGG" id="rms:RMA_0563"/>
<dbReference type="HOGENOM" id="CLU_068508_1_2_5"/>
<dbReference type="UniPathway" id="UPA00610">
    <property type="reaction ID" value="UER00666"/>
</dbReference>
<dbReference type="Proteomes" id="UP000001311">
    <property type="component" value="Chromosome"/>
</dbReference>
<dbReference type="GO" id="GO:0004170">
    <property type="term" value="F:dUTP diphosphatase activity"/>
    <property type="evidence" value="ECO:0007669"/>
    <property type="project" value="UniProtKB-UniRule"/>
</dbReference>
<dbReference type="GO" id="GO:0000287">
    <property type="term" value="F:magnesium ion binding"/>
    <property type="evidence" value="ECO:0007669"/>
    <property type="project" value="UniProtKB-UniRule"/>
</dbReference>
<dbReference type="GO" id="GO:0006226">
    <property type="term" value="P:dUMP biosynthetic process"/>
    <property type="evidence" value="ECO:0007669"/>
    <property type="project" value="UniProtKB-UniRule"/>
</dbReference>
<dbReference type="GO" id="GO:0046081">
    <property type="term" value="P:dUTP catabolic process"/>
    <property type="evidence" value="ECO:0007669"/>
    <property type="project" value="InterPro"/>
</dbReference>
<dbReference type="CDD" id="cd07557">
    <property type="entry name" value="trimeric_dUTPase"/>
    <property type="match status" value="1"/>
</dbReference>
<dbReference type="FunFam" id="2.70.40.10:FF:000002">
    <property type="entry name" value="dUTP diphosphatase"/>
    <property type="match status" value="1"/>
</dbReference>
<dbReference type="Gene3D" id="2.70.40.10">
    <property type="match status" value="1"/>
</dbReference>
<dbReference type="HAMAP" id="MF_00116">
    <property type="entry name" value="dUTPase_bact"/>
    <property type="match status" value="1"/>
</dbReference>
<dbReference type="InterPro" id="IPR008181">
    <property type="entry name" value="dUTPase"/>
</dbReference>
<dbReference type="InterPro" id="IPR029054">
    <property type="entry name" value="dUTPase-like"/>
</dbReference>
<dbReference type="InterPro" id="IPR036157">
    <property type="entry name" value="dUTPase-like_sf"/>
</dbReference>
<dbReference type="InterPro" id="IPR033704">
    <property type="entry name" value="dUTPase_trimeric"/>
</dbReference>
<dbReference type="NCBIfam" id="TIGR00576">
    <property type="entry name" value="dut"/>
    <property type="match status" value="1"/>
</dbReference>
<dbReference type="NCBIfam" id="NF001862">
    <property type="entry name" value="PRK00601.1"/>
    <property type="match status" value="1"/>
</dbReference>
<dbReference type="PANTHER" id="PTHR11241">
    <property type="entry name" value="DEOXYURIDINE 5'-TRIPHOSPHATE NUCLEOTIDOHYDROLASE"/>
    <property type="match status" value="1"/>
</dbReference>
<dbReference type="PANTHER" id="PTHR11241:SF0">
    <property type="entry name" value="DEOXYURIDINE 5'-TRIPHOSPHATE NUCLEOTIDOHYDROLASE"/>
    <property type="match status" value="1"/>
</dbReference>
<dbReference type="Pfam" id="PF00692">
    <property type="entry name" value="dUTPase"/>
    <property type="match status" value="1"/>
</dbReference>
<dbReference type="SUPFAM" id="SSF51283">
    <property type="entry name" value="dUTPase-like"/>
    <property type="match status" value="1"/>
</dbReference>
<organism>
    <name type="scientific">Rickettsia massiliae (strain Mtu5)</name>
    <dbReference type="NCBI Taxonomy" id="416276"/>
    <lineage>
        <taxon>Bacteria</taxon>
        <taxon>Pseudomonadati</taxon>
        <taxon>Pseudomonadota</taxon>
        <taxon>Alphaproteobacteria</taxon>
        <taxon>Rickettsiales</taxon>
        <taxon>Rickettsiaceae</taxon>
        <taxon>Rickettsieae</taxon>
        <taxon>Rickettsia</taxon>
        <taxon>spotted fever group</taxon>
    </lineage>
</organism>